<feature type="peptide" id="PRO_0000015753" description="Insulin B chain">
    <location>
        <begin position="1"/>
        <end position="30"/>
    </location>
</feature>
<feature type="peptide" id="PRO_0000015754" description="Insulin A chain">
    <location>
        <begin position="31"/>
        <end position="51"/>
    </location>
</feature>
<feature type="disulfide bond" description="Interchain (between B and A chains)">
    <location>
        <begin position="7"/>
        <end position="37"/>
    </location>
</feature>
<feature type="disulfide bond" description="Interchain (between B and A chains)">
    <location>
        <begin position="19"/>
        <end position="50"/>
    </location>
</feature>
<feature type="disulfide bond">
    <location>
        <begin position="36"/>
        <end position="41"/>
    </location>
</feature>
<feature type="non-consecutive residues" evidence="1">
    <location>
        <begin position="30"/>
        <end position="31"/>
    </location>
</feature>
<accession>P68245</accession>
<accession>P07454</accession>
<accession>Q10995</accession>
<protein>
    <recommendedName>
        <fullName>Insulin</fullName>
    </recommendedName>
    <component>
        <recommendedName>
            <fullName>Insulin B chain</fullName>
        </recommendedName>
    </component>
    <component>
        <recommendedName>
            <fullName>Insulin A chain</fullName>
        </recommendedName>
    </component>
</protein>
<gene>
    <name type="primary">INS</name>
</gene>
<reference key="1">
    <citation type="journal article" date="1983" name="Kexue Tongbao">
        <title>Isolation and sequence determination of goose insulin.</title>
        <authorList>
            <person name="Xu Y."/>
            <person name="Lin N."/>
            <person name="Zhang Y."/>
            <person name="Zhang Y."/>
        </authorList>
    </citation>
    <scope>PROTEIN SEQUENCE</scope>
</reference>
<proteinExistence type="evidence at protein level"/>
<evidence type="ECO:0000305" key="1"/>
<comment type="function">
    <text>Insulin decreases blood glucose concentration. It increases cell permeability to monosaccharides, amino acids and fatty acids. It accelerates glycolysis, the pentose phosphate cycle, and glycogen synthesis in liver.</text>
</comment>
<comment type="subunit">
    <text>Heterodimer of a B chain and an A chain linked by two disulfide bonds.</text>
</comment>
<comment type="subcellular location">
    <subcellularLocation>
        <location>Secreted</location>
    </subcellularLocation>
</comment>
<comment type="similarity">
    <text evidence="1">Belongs to the insulin family.</text>
</comment>
<dbReference type="PIR" id="JC0007">
    <property type="entry name" value="INGS"/>
</dbReference>
<dbReference type="SMR" id="P68245"/>
<dbReference type="GO" id="GO:0005615">
    <property type="term" value="C:extracellular space"/>
    <property type="evidence" value="ECO:0007669"/>
    <property type="project" value="TreeGrafter"/>
</dbReference>
<dbReference type="GO" id="GO:0005179">
    <property type="term" value="F:hormone activity"/>
    <property type="evidence" value="ECO:0007669"/>
    <property type="project" value="UniProtKB-KW"/>
</dbReference>
<dbReference type="GO" id="GO:0006006">
    <property type="term" value="P:glucose metabolic process"/>
    <property type="evidence" value="ECO:0007669"/>
    <property type="project" value="UniProtKB-KW"/>
</dbReference>
<dbReference type="CDD" id="cd04367">
    <property type="entry name" value="IlGF_insulin_like"/>
    <property type="match status" value="1"/>
</dbReference>
<dbReference type="Gene3D" id="1.10.100.10">
    <property type="entry name" value="Insulin-like"/>
    <property type="match status" value="1"/>
</dbReference>
<dbReference type="InterPro" id="IPR004825">
    <property type="entry name" value="Insulin"/>
</dbReference>
<dbReference type="InterPro" id="IPR016179">
    <property type="entry name" value="Insulin-like"/>
</dbReference>
<dbReference type="InterPro" id="IPR036438">
    <property type="entry name" value="Insulin-like_sf"/>
</dbReference>
<dbReference type="InterPro" id="IPR022353">
    <property type="entry name" value="Insulin_CS"/>
</dbReference>
<dbReference type="InterPro" id="IPR022352">
    <property type="entry name" value="Insulin_family"/>
</dbReference>
<dbReference type="PANTHER" id="PTHR11454:SF9">
    <property type="entry name" value="INSULIN"/>
    <property type="match status" value="1"/>
</dbReference>
<dbReference type="PANTHER" id="PTHR11454">
    <property type="entry name" value="INSULIN/INSULIN GROWTH FACTOR"/>
    <property type="match status" value="1"/>
</dbReference>
<dbReference type="Pfam" id="PF00049">
    <property type="entry name" value="Insulin"/>
    <property type="match status" value="1"/>
</dbReference>
<dbReference type="PRINTS" id="PR00277">
    <property type="entry name" value="INSULIN"/>
</dbReference>
<dbReference type="PRINTS" id="PR00276">
    <property type="entry name" value="INSULINFAMLY"/>
</dbReference>
<dbReference type="SMART" id="SM00078">
    <property type="entry name" value="IlGF"/>
    <property type="match status" value="1"/>
</dbReference>
<dbReference type="SUPFAM" id="SSF56994">
    <property type="entry name" value="Insulin-like"/>
    <property type="match status" value="1"/>
</dbReference>
<dbReference type="PROSITE" id="PS00262">
    <property type="entry name" value="INSULIN"/>
    <property type="match status" value="1"/>
</dbReference>
<name>INS_ANSAN</name>
<organism>
    <name type="scientific">Anser anser anser</name>
    <name type="common">Western greylag goose</name>
    <dbReference type="NCBI Taxonomy" id="8844"/>
    <lineage>
        <taxon>Eukaryota</taxon>
        <taxon>Metazoa</taxon>
        <taxon>Chordata</taxon>
        <taxon>Craniata</taxon>
        <taxon>Vertebrata</taxon>
        <taxon>Euteleostomi</taxon>
        <taxon>Archelosauria</taxon>
        <taxon>Archosauria</taxon>
        <taxon>Dinosauria</taxon>
        <taxon>Saurischia</taxon>
        <taxon>Theropoda</taxon>
        <taxon>Coelurosauria</taxon>
        <taxon>Aves</taxon>
        <taxon>Neognathae</taxon>
        <taxon>Galloanserae</taxon>
        <taxon>Anseriformes</taxon>
        <taxon>Anatidae</taxon>
        <taxon>Anserinae</taxon>
        <taxon>Anser</taxon>
    </lineage>
</organism>
<keyword id="KW-0119">Carbohydrate metabolism</keyword>
<keyword id="KW-0903">Direct protein sequencing</keyword>
<keyword id="KW-1015">Disulfide bond</keyword>
<keyword id="KW-0313">Glucose metabolism</keyword>
<keyword id="KW-0372">Hormone</keyword>
<keyword id="KW-0964">Secreted</keyword>
<sequence length="51" mass="5716">AANQHLCGSHLVEALYLVCGERGFFYSPKTGIVEQCCENPCSLYQLENYCN</sequence>